<gene>
    <name evidence="1" type="primary">rpsB</name>
    <name type="ordered locus">Suden_1802</name>
</gene>
<proteinExistence type="inferred from homology"/>
<dbReference type="EMBL" id="CP000153">
    <property type="protein sequence ID" value="ABB45076.1"/>
    <property type="molecule type" value="Genomic_DNA"/>
</dbReference>
<dbReference type="RefSeq" id="WP_011373416.1">
    <property type="nucleotide sequence ID" value="NC_007575.1"/>
</dbReference>
<dbReference type="SMR" id="Q30PK5"/>
<dbReference type="STRING" id="326298.Suden_1802"/>
<dbReference type="KEGG" id="tdn:Suden_1802"/>
<dbReference type="eggNOG" id="COG0052">
    <property type="taxonomic scope" value="Bacteria"/>
</dbReference>
<dbReference type="HOGENOM" id="CLU_040318_1_2_7"/>
<dbReference type="OrthoDB" id="9808036at2"/>
<dbReference type="Proteomes" id="UP000002714">
    <property type="component" value="Chromosome"/>
</dbReference>
<dbReference type="GO" id="GO:0022627">
    <property type="term" value="C:cytosolic small ribosomal subunit"/>
    <property type="evidence" value="ECO:0007669"/>
    <property type="project" value="TreeGrafter"/>
</dbReference>
<dbReference type="GO" id="GO:0003735">
    <property type="term" value="F:structural constituent of ribosome"/>
    <property type="evidence" value="ECO:0007669"/>
    <property type="project" value="InterPro"/>
</dbReference>
<dbReference type="GO" id="GO:0006412">
    <property type="term" value="P:translation"/>
    <property type="evidence" value="ECO:0007669"/>
    <property type="project" value="UniProtKB-UniRule"/>
</dbReference>
<dbReference type="CDD" id="cd01425">
    <property type="entry name" value="RPS2"/>
    <property type="match status" value="1"/>
</dbReference>
<dbReference type="FunFam" id="1.10.287.610:FF:000001">
    <property type="entry name" value="30S ribosomal protein S2"/>
    <property type="match status" value="1"/>
</dbReference>
<dbReference type="Gene3D" id="3.40.50.10490">
    <property type="entry name" value="Glucose-6-phosphate isomerase like protein, domain 1"/>
    <property type="match status" value="1"/>
</dbReference>
<dbReference type="Gene3D" id="1.10.287.610">
    <property type="entry name" value="Helix hairpin bin"/>
    <property type="match status" value="1"/>
</dbReference>
<dbReference type="HAMAP" id="MF_00291_B">
    <property type="entry name" value="Ribosomal_uS2_B"/>
    <property type="match status" value="1"/>
</dbReference>
<dbReference type="InterPro" id="IPR001865">
    <property type="entry name" value="Ribosomal_uS2"/>
</dbReference>
<dbReference type="InterPro" id="IPR005706">
    <property type="entry name" value="Ribosomal_uS2_bac/mit/plastid"/>
</dbReference>
<dbReference type="InterPro" id="IPR018130">
    <property type="entry name" value="Ribosomal_uS2_CS"/>
</dbReference>
<dbReference type="InterPro" id="IPR023591">
    <property type="entry name" value="Ribosomal_uS2_flav_dom_sf"/>
</dbReference>
<dbReference type="NCBIfam" id="TIGR01011">
    <property type="entry name" value="rpsB_bact"/>
    <property type="match status" value="1"/>
</dbReference>
<dbReference type="PANTHER" id="PTHR12534">
    <property type="entry name" value="30S RIBOSOMAL PROTEIN S2 PROKARYOTIC AND ORGANELLAR"/>
    <property type="match status" value="1"/>
</dbReference>
<dbReference type="PANTHER" id="PTHR12534:SF0">
    <property type="entry name" value="SMALL RIBOSOMAL SUBUNIT PROTEIN US2M"/>
    <property type="match status" value="1"/>
</dbReference>
<dbReference type="Pfam" id="PF00318">
    <property type="entry name" value="Ribosomal_S2"/>
    <property type="match status" value="1"/>
</dbReference>
<dbReference type="PRINTS" id="PR00395">
    <property type="entry name" value="RIBOSOMALS2"/>
</dbReference>
<dbReference type="SUPFAM" id="SSF52313">
    <property type="entry name" value="Ribosomal protein S2"/>
    <property type="match status" value="1"/>
</dbReference>
<dbReference type="PROSITE" id="PS00962">
    <property type="entry name" value="RIBOSOMAL_S2_1"/>
    <property type="match status" value="1"/>
</dbReference>
<dbReference type="PROSITE" id="PS00963">
    <property type="entry name" value="RIBOSOMAL_S2_2"/>
    <property type="match status" value="1"/>
</dbReference>
<evidence type="ECO:0000255" key="1">
    <source>
        <dbReference type="HAMAP-Rule" id="MF_00291"/>
    </source>
</evidence>
<evidence type="ECO:0000256" key="2">
    <source>
        <dbReference type="SAM" id="MobiDB-lite"/>
    </source>
</evidence>
<evidence type="ECO:0000305" key="3"/>
<accession>Q30PK5</accession>
<sequence>MVTMKDLLECGVHFGHQTRRWNPKMKKYIFGVRKNIYIIDLQKTLRYFRNTYTIVMDAAAEGKTVLFVGTKKQARASVRDAAIACGMPYVDNRWLGGMLTNFPTIQKSIRKLDVISEMQENGQIDLLTKKEALMLSRQKEKLESYFGGIRNMKKLPDMLFVMDAVKEHIAVLEARCLGIPVVAPLDTNCDPDLITYPIPGNDDAIRSIQLFCREMTEAINEGKALRSGGRDEIVAEDSEEVSTVDADAITAEDFETEEV</sequence>
<feature type="chain" id="PRO_1000004109" description="Small ribosomal subunit protein uS2">
    <location>
        <begin position="1"/>
        <end position="259"/>
    </location>
</feature>
<feature type="region of interest" description="Disordered" evidence="2">
    <location>
        <begin position="234"/>
        <end position="259"/>
    </location>
</feature>
<feature type="compositionally biased region" description="Acidic residues" evidence="2">
    <location>
        <begin position="250"/>
        <end position="259"/>
    </location>
</feature>
<reference key="1">
    <citation type="journal article" date="2008" name="Appl. Environ. Microbiol.">
        <title>Genome of the epsilonproteobacterial chemolithoautotroph Sulfurimonas denitrificans.</title>
        <authorList>
            <person name="Sievert S.M."/>
            <person name="Scott K.M."/>
            <person name="Klotz M.G."/>
            <person name="Chain P.S.G."/>
            <person name="Hauser L.J."/>
            <person name="Hemp J."/>
            <person name="Huegler M."/>
            <person name="Land M."/>
            <person name="Lapidus A."/>
            <person name="Larimer F.W."/>
            <person name="Lucas S."/>
            <person name="Malfatti S.A."/>
            <person name="Meyer F."/>
            <person name="Paulsen I.T."/>
            <person name="Ren Q."/>
            <person name="Simon J."/>
            <person name="Bailey K."/>
            <person name="Diaz E."/>
            <person name="Fitzpatrick K.A."/>
            <person name="Glover B."/>
            <person name="Gwatney N."/>
            <person name="Korajkic A."/>
            <person name="Long A."/>
            <person name="Mobberley J.M."/>
            <person name="Pantry S.N."/>
            <person name="Pazder G."/>
            <person name="Peterson S."/>
            <person name="Quintanilla J.D."/>
            <person name="Sprinkle R."/>
            <person name="Stephens J."/>
            <person name="Thomas P."/>
            <person name="Vaughn R."/>
            <person name="Weber M.J."/>
            <person name="Wooten L.L."/>
        </authorList>
    </citation>
    <scope>NUCLEOTIDE SEQUENCE [LARGE SCALE GENOMIC DNA]</scope>
    <source>
        <strain>ATCC 33889 / DSM 1251</strain>
    </source>
</reference>
<organism>
    <name type="scientific">Sulfurimonas denitrificans (strain ATCC 33889 / DSM 1251)</name>
    <name type="common">Thiomicrospira denitrificans (strain ATCC 33889 / DSM 1251)</name>
    <dbReference type="NCBI Taxonomy" id="326298"/>
    <lineage>
        <taxon>Bacteria</taxon>
        <taxon>Pseudomonadati</taxon>
        <taxon>Campylobacterota</taxon>
        <taxon>Epsilonproteobacteria</taxon>
        <taxon>Campylobacterales</taxon>
        <taxon>Sulfurimonadaceae</taxon>
        <taxon>Sulfurimonas</taxon>
    </lineage>
</organism>
<comment type="similarity">
    <text evidence="1">Belongs to the universal ribosomal protein uS2 family.</text>
</comment>
<protein>
    <recommendedName>
        <fullName evidence="1">Small ribosomal subunit protein uS2</fullName>
    </recommendedName>
    <alternativeName>
        <fullName evidence="3">30S ribosomal protein S2</fullName>
    </alternativeName>
</protein>
<keyword id="KW-1185">Reference proteome</keyword>
<keyword id="KW-0687">Ribonucleoprotein</keyword>
<keyword id="KW-0689">Ribosomal protein</keyword>
<name>RS2_SULDN</name>